<feature type="chain" id="PRO_0000097375" description="Ribonuclease E">
    <location>
        <begin position="1"/>
        <end position="935"/>
    </location>
</feature>
<feature type="domain" description="S1 motif" evidence="1">
    <location>
        <begin position="39"/>
        <end position="119"/>
    </location>
</feature>
<feature type="region of interest" description="Required for zinc-mediated homotetramerization and catalytic activity" evidence="1">
    <location>
        <begin position="403"/>
        <end position="406"/>
    </location>
</feature>
<feature type="region of interest" description="Disordered" evidence="2">
    <location>
        <begin position="571"/>
        <end position="669"/>
    </location>
</feature>
<feature type="region of interest" description="Disordered" evidence="2">
    <location>
        <begin position="698"/>
        <end position="743"/>
    </location>
</feature>
<feature type="compositionally biased region" description="Basic and acidic residues" evidence="2">
    <location>
        <begin position="593"/>
        <end position="625"/>
    </location>
</feature>
<feature type="compositionally biased region" description="Basic and acidic residues" evidence="2">
    <location>
        <begin position="701"/>
        <end position="719"/>
    </location>
</feature>
<feature type="compositionally biased region" description="Basic residues" evidence="2">
    <location>
        <begin position="720"/>
        <end position="734"/>
    </location>
</feature>
<feature type="binding site" evidence="1">
    <location>
        <position position="302"/>
    </location>
    <ligand>
        <name>Mg(2+)</name>
        <dbReference type="ChEBI" id="CHEBI:18420"/>
        <note>catalytic</note>
    </ligand>
</feature>
<feature type="binding site" evidence="1">
    <location>
        <position position="345"/>
    </location>
    <ligand>
        <name>Mg(2+)</name>
        <dbReference type="ChEBI" id="CHEBI:18420"/>
        <note>catalytic</note>
    </ligand>
</feature>
<feature type="binding site" evidence="1">
    <location>
        <position position="403"/>
    </location>
    <ligand>
        <name>Zn(2+)</name>
        <dbReference type="ChEBI" id="CHEBI:29105"/>
        <note>ligand shared between dimeric partners</note>
    </ligand>
</feature>
<feature type="binding site" evidence="1">
    <location>
        <position position="406"/>
    </location>
    <ligand>
        <name>Zn(2+)</name>
        <dbReference type="ChEBI" id="CHEBI:29105"/>
        <note>ligand shared between dimeric partners</note>
    </ligand>
</feature>
<comment type="function">
    <text evidence="1">Endoribonuclease that plays a central role in RNA processing and decay. Required for the maturation of 5S and 16S rRNAs and the majority of tRNAs. Also involved in the degradation of most mRNAs.</text>
</comment>
<comment type="catalytic activity">
    <reaction evidence="1">
        <text>Endonucleolytic cleavage of single-stranded RNA in A- and U-rich regions.</text>
        <dbReference type="EC" id="3.1.26.12"/>
    </reaction>
</comment>
<comment type="cofactor">
    <cofactor evidence="1">
        <name>Zn(2+)</name>
        <dbReference type="ChEBI" id="CHEBI:29105"/>
    </cofactor>
    <text evidence="1">Binds 2 Zn(2+) ions per homotetramer.</text>
</comment>
<comment type="cofactor">
    <cofactor evidence="1">
        <name>Mg(2+)</name>
        <dbReference type="ChEBI" id="CHEBI:18420"/>
    </cofactor>
    <text evidence="1">Binds 1 Mg(2+) ion per subunit.</text>
</comment>
<comment type="subunit">
    <text evidence="1">Component of the RNA degradosome, which is a multiprotein complex involved in RNA processing and mRNA degradation. Within the RNA degradosome, RNase E assembles into a homotetramer formed by a dimer of dimers.</text>
</comment>
<comment type="subcellular location">
    <subcellularLocation>
        <location evidence="1 3">Cytoplasm</location>
    </subcellularLocation>
    <subcellularLocation>
        <location evidence="1 3">Cell inner membrane</location>
        <topology evidence="1">Peripheral membrane protein</topology>
        <orientation evidence="1">Cytoplasmic side</orientation>
    </subcellularLocation>
    <text evidence="3">Associated with the inner membrane via the N-terminal region (residues 1-418), subcellular locations shown upon expression in E.coli.</text>
</comment>
<comment type="similarity">
    <text evidence="1">Belongs to the RNase E/G family. RNase E subfamily.</text>
</comment>
<comment type="sequence caution" evidence="4">
    <conflict type="erroneous initiation">
        <sequence resource="EMBL-CDS" id="AAC22072"/>
    </conflict>
    <text>Extended N-terminus.</text>
</comment>
<accession>P44443</accession>
<keyword id="KW-0997">Cell inner membrane</keyword>
<keyword id="KW-1003">Cell membrane</keyword>
<keyword id="KW-0963">Cytoplasm</keyword>
<keyword id="KW-0255">Endonuclease</keyword>
<keyword id="KW-0378">Hydrolase</keyword>
<keyword id="KW-0460">Magnesium</keyword>
<keyword id="KW-0472">Membrane</keyword>
<keyword id="KW-0479">Metal-binding</keyword>
<keyword id="KW-0540">Nuclease</keyword>
<keyword id="KW-1185">Reference proteome</keyword>
<keyword id="KW-0694">RNA-binding</keyword>
<keyword id="KW-0698">rRNA processing</keyword>
<keyword id="KW-0699">rRNA-binding</keyword>
<keyword id="KW-0819">tRNA processing</keyword>
<keyword id="KW-0862">Zinc</keyword>
<gene>
    <name evidence="1" type="primary">rne</name>
    <name type="ordered locus">HI_0413</name>
</gene>
<sequence>MKRMLINATQKEELRVALVDGQRLFDLDIESPGHEQKKANIYKGKITRVEPSLEAAFVDYGAERHGFLPLKEIAREYFPDDYVFQGRPNIRDILVEGQEVIVQVNKEERGNKGAALTTFVSLAGSYLVLMPNNPRAGGISRRIEGDERTELKEALSSLDVPDGVGLIVRTAGVGKSPEELQWDLKVLLHHWEAIKQASQSRPAPFLIHQESDVIVRAIRDYLRRDIGEILIDSPKIFEKAKEHIKLVRPDFINRVKLYQGEVPLFSHYQIESQIESAFQREVRLPSGGSIVIDVTEALTAIDINSARSTRGGDIEETALNTNLEAADEIARQLRLRDLGGLVVIDFIDMTPIRHQREVENRIRDAVRPDRARIQISRISRFGLLEMSRQRLSPSLGESSHHICPRCQGTGKVRDNESLSLSILRLLEEEALKENTKQVHTIVPVQIASYLLNEKRKAISNIEKRHNVDIIVAPNEAMETPHFSVFRLRDGEEVNELSYNLAKIHCAQDENTEESLLSRNVETTAVIEQPAVESAVVALSISEAAPTPVERKSNEPSLLAKIIAKIKGLFATKSEENKPKNNRTSRNPNRNQRRSQDRRSSRRPRSENNETERTEEQVRNVRERNQRRPRRNLVEESIAESAVNSTPVFEAKEERTEPVTQRRQRRDLRKRVRVEDNETVVENNFSTTEKMPEVDVITVQNNDEKPVHQNQRSERQERQRRTPRHLRAANNQRRRRDQEPKSPMPLFAAVVSPELASGKAWIDYSTVNLPKENHFLSVDELLEQEKTKKGFITPAMGIVVEEKSPDVKPALDFITQPANESVQKKVQESLDRLSSYKPQEVVESIDPAINVDEPETLEKVSKFVRTYEFNGRLGTISSVPHTKAEMTLAKANDEMPEDFPIRAWQDSRYYFYGKGAAGHHCAISHVYSEPTRTKSE</sequence>
<protein>
    <recommendedName>
        <fullName evidence="1">Ribonuclease E</fullName>
        <shortName evidence="1">RNase E</shortName>
        <ecNumber evidence="1">3.1.26.12</ecNumber>
    </recommendedName>
</protein>
<organism>
    <name type="scientific">Haemophilus influenzae (strain ATCC 51907 / DSM 11121 / KW20 / Rd)</name>
    <dbReference type="NCBI Taxonomy" id="71421"/>
    <lineage>
        <taxon>Bacteria</taxon>
        <taxon>Pseudomonadati</taxon>
        <taxon>Pseudomonadota</taxon>
        <taxon>Gammaproteobacteria</taxon>
        <taxon>Pasteurellales</taxon>
        <taxon>Pasteurellaceae</taxon>
        <taxon>Haemophilus</taxon>
    </lineage>
</organism>
<evidence type="ECO:0000255" key="1">
    <source>
        <dbReference type="HAMAP-Rule" id="MF_00970"/>
    </source>
</evidence>
<evidence type="ECO:0000256" key="2">
    <source>
        <dbReference type="SAM" id="MobiDB-lite"/>
    </source>
</evidence>
<evidence type="ECO:0000269" key="3">
    <source>
    </source>
</evidence>
<evidence type="ECO:0000305" key="4"/>
<reference key="1">
    <citation type="journal article" date="1995" name="Science">
        <title>Whole-genome random sequencing and assembly of Haemophilus influenzae Rd.</title>
        <authorList>
            <person name="Fleischmann R.D."/>
            <person name="Adams M.D."/>
            <person name="White O."/>
            <person name="Clayton R.A."/>
            <person name="Kirkness E.F."/>
            <person name="Kerlavage A.R."/>
            <person name="Bult C.J."/>
            <person name="Tomb J.-F."/>
            <person name="Dougherty B.A."/>
            <person name="Merrick J.M."/>
            <person name="McKenney K."/>
            <person name="Sutton G.G."/>
            <person name="FitzHugh W."/>
            <person name="Fields C.A."/>
            <person name="Gocayne J.D."/>
            <person name="Scott J.D."/>
            <person name="Shirley R."/>
            <person name="Liu L.-I."/>
            <person name="Glodek A."/>
            <person name="Kelley J.M."/>
            <person name="Weidman J.F."/>
            <person name="Phillips C.A."/>
            <person name="Spriggs T."/>
            <person name="Hedblom E."/>
            <person name="Cotton M.D."/>
            <person name="Utterback T.R."/>
            <person name="Hanna M.C."/>
            <person name="Nguyen D.T."/>
            <person name="Saudek D.M."/>
            <person name="Brandon R.C."/>
            <person name="Fine L.D."/>
            <person name="Fritchman J.L."/>
            <person name="Fuhrmann J.L."/>
            <person name="Geoghagen N.S.M."/>
            <person name="Gnehm C.L."/>
            <person name="McDonald L.A."/>
            <person name="Small K.V."/>
            <person name="Fraser C.M."/>
            <person name="Smith H.O."/>
            <person name="Venter J.C."/>
        </authorList>
    </citation>
    <scope>NUCLEOTIDE SEQUENCE [LARGE SCALE GENOMIC DNA]</scope>
    <source>
        <strain>ATCC 51907 / DSM 11121 / KW20 / Rd</strain>
    </source>
</reference>
<reference key="2">
    <citation type="journal article" date="2012" name="Proc. Natl. Acad. Sci. U.S.A.">
        <title>Membrane binding of Escherichia coli RNase E catalytic domain stabilizes protein structure and increases RNA substrate affinity.</title>
        <authorList>
            <person name="Murashko O.N."/>
            <person name="Kaberdin V.R."/>
            <person name="Lin-Chao S."/>
        </authorList>
    </citation>
    <scope>SUBCELLULAR LOCATION</scope>
    <scope>EXPRESSION IN E.COLI</scope>
    <source>
        <strain>ATCC 51907 / DSM 11121 / KW20 / Rd</strain>
    </source>
</reference>
<name>RNE_HAEIN</name>
<dbReference type="EC" id="3.1.26.12" evidence="1"/>
<dbReference type="EMBL" id="L42023">
    <property type="protein sequence ID" value="AAC22072.1"/>
    <property type="status" value="ALT_INIT"/>
    <property type="molecule type" value="Genomic_DNA"/>
</dbReference>
<dbReference type="PIR" id="E64066">
    <property type="entry name" value="E64066"/>
</dbReference>
<dbReference type="RefSeq" id="NP_438575.2">
    <property type="nucleotide sequence ID" value="NC_000907.1"/>
</dbReference>
<dbReference type="SMR" id="P44443"/>
<dbReference type="STRING" id="71421.HI_0413"/>
<dbReference type="EnsemblBacteria" id="AAC22072">
    <property type="protein sequence ID" value="AAC22072"/>
    <property type="gene ID" value="HI_0413"/>
</dbReference>
<dbReference type="KEGG" id="hin:HI_0413"/>
<dbReference type="PATRIC" id="fig|71421.8.peg.433"/>
<dbReference type="eggNOG" id="COG1530">
    <property type="taxonomic scope" value="Bacteria"/>
</dbReference>
<dbReference type="HOGENOM" id="CLU_003468_1_0_6"/>
<dbReference type="OrthoDB" id="9804278at2"/>
<dbReference type="PhylomeDB" id="P44443"/>
<dbReference type="BioCyc" id="HINF71421:G1GJ1-428-MONOMER"/>
<dbReference type="BRENDA" id="3.1.26.12">
    <property type="organism ID" value="2529"/>
</dbReference>
<dbReference type="Proteomes" id="UP000000579">
    <property type="component" value="Chromosome"/>
</dbReference>
<dbReference type="GO" id="GO:0005737">
    <property type="term" value="C:cytoplasm"/>
    <property type="evidence" value="ECO:0000318"/>
    <property type="project" value="GO_Central"/>
</dbReference>
<dbReference type="GO" id="GO:0009898">
    <property type="term" value="C:cytoplasmic side of plasma membrane"/>
    <property type="evidence" value="ECO:0007669"/>
    <property type="project" value="UniProtKB-UniRule"/>
</dbReference>
<dbReference type="GO" id="GO:0000287">
    <property type="term" value="F:magnesium ion binding"/>
    <property type="evidence" value="ECO:0007669"/>
    <property type="project" value="UniProtKB-UniRule"/>
</dbReference>
<dbReference type="GO" id="GO:0008995">
    <property type="term" value="F:ribonuclease E activity"/>
    <property type="evidence" value="ECO:0007669"/>
    <property type="project" value="InterPro"/>
</dbReference>
<dbReference type="GO" id="GO:0004521">
    <property type="term" value="F:RNA endonuclease activity"/>
    <property type="evidence" value="ECO:0007669"/>
    <property type="project" value="UniProtKB-UniRule"/>
</dbReference>
<dbReference type="GO" id="GO:0004540">
    <property type="term" value="F:RNA nuclease activity"/>
    <property type="evidence" value="ECO:0000318"/>
    <property type="project" value="GO_Central"/>
</dbReference>
<dbReference type="GO" id="GO:0019843">
    <property type="term" value="F:rRNA binding"/>
    <property type="evidence" value="ECO:0007669"/>
    <property type="project" value="UniProtKB-KW"/>
</dbReference>
<dbReference type="GO" id="GO:0008270">
    <property type="term" value="F:zinc ion binding"/>
    <property type="evidence" value="ECO:0007669"/>
    <property type="project" value="UniProtKB-UniRule"/>
</dbReference>
<dbReference type="GO" id="GO:0006402">
    <property type="term" value="P:mRNA catabolic process"/>
    <property type="evidence" value="ECO:0007669"/>
    <property type="project" value="UniProtKB-UniRule"/>
</dbReference>
<dbReference type="GO" id="GO:0006364">
    <property type="term" value="P:rRNA processing"/>
    <property type="evidence" value="ECO:0000318"/>
    <property type="project" value="GO_Central"/>
</dbReference>
<dbReference type="GO" id="GO:0008033">
    <property type="term" value="P:tRNA processing"/>
    <property type="evidence" value="ECO:0007669"/>
    <property type="project" value="UniProtKB-UniRule"/>
</dbReference>
<dbReference type="CDD" id="cd04453">
    <property type="entry name" value="S1_RNase_E"/>
    <property type="match status" value="1"/>
</dbReference>
<dbReference type="FunFam" id="2.40.50.140:FF:000040">
    <property type="entry name" value="Ribonuclease E"/>
    <property type="match status" value="1"/>
</dbReference>
<dbReference type="FunFam" id="3.40.1260.20:FF:000002">
    <property type="entry name" value="Ribonuclease E"/>
    <property type="match status" value="1"/>
</dbReference>
<dbReference type="Gene3D" id="2.40.50.140">
    <property type="entry name" value="Nucleic acid-binding proteins"/>
    <property type="match status" value="1"/>
</dbReference>
<dbReference type="Gene3D" id="3.40.1260.20">
    <property type="entry name" value="Ribonuclease E, catalytic domain"/>
    <property type="match status" value="1"/>
</dbReference>
<dbReference type="HAMAP" id="MF_00970">
    <property type="entry name" value="RNase_E"/>
    <property type="match status" value="1"/>
</dbReference>
<dbReference type="InterPro" id="IPR012340">
    <property type="entry name" value="NA-bd_OB-fold"/>
</dbReference>
<dbReference type="InterPro" id="IPR021968">
    <property type="entry name" value="PNPase_C"/>
</dbReference>
<dbReference type="InterPro" id="IPR019307">
    <property type="entry name" value="RNA-bd_AU-1/RNase_E/G"/>
</dbReference>
<dbReference type="InterPro" id="IPR028878">
    <property type="entry name" value="RNase_E"/>
</dbReference>
<dbReference type="InterPro" id="IPR004659">
    <property type="entry name" value="RNase_E/G"/>
</dbReference>
<dbReference type="InterPro" id="IPR048583">
    <property type="entry name" value="RNase_E_G_thioredoxin-like"/>
</dbReference>
<dbReference type="InterPro" id="IPR003029">
    <property type="entry name" value="S1_domain"/>
</dbReference>
<dbReference type="NCBIfam" id="NF008074">
    <property type="entry name" value="PRK10811.1"/>
    <property type="match status" value="1"/>
</dbReference>
<dbReference type="NCBIfam" id="TIGR00757">
    <property type="entry name" value="RNaseEG"/>
    <property type="match status" value="1"/>
</dbReference>
<dbReference type="PANTHER" id="PTHR30001">
    <property type="entry name" value="RIBONUCLEASE"/>
    <property type="match status" value="1"/>
</dbReference>
<dbReference type="PANTHER" id="PTHR30001:SF1">
    <property type="entry name" value="RIBONUCLEASE E_G-LIKE PROTEIN, CHLOROPLASTIC"/>
    <property type="match status" value="1"/>
</dbReference>
<dbReference type="Pfam" id="PF12111">
    <property type="entry name" value="PNPase_C"/>
    <property type="match status" value="1"/>
</dbReference>
<dbReference type="Pfam" id="PF10150">
    <property type="entry name" value="RNase_E_G"/>
    <property type="match status" value="1"/>
</dbReference>
<dbReference type="Pfam" id="PF20833">
    <property type="entry name" value="RNase_E_G_Thio"/>
    <property type="match status" value="1"/>
</dbReference>
<dbReference type="Pfam" id="PF00575">
    <property type="entry name" value="S1"/>
    <property type="match status" value="1"/>
</dbReference>
<dbReference type="SMART" id="SM00316">
    <property type="entry name" value="S1"/>
    <property type="match status" value="1"/>
</dbReference>
<dbReference type="SUPFAM" id="SSF50249">
    <property type="entry name" value="Nucleic acid-binding proteins"/>
    <property type="match status" value="1"/>
</dbReference>
<dbReference type="PROSITE" id="PS50126">
    <property type="entry name" value="S1"/>
    <property type="match status" value="1"/>
</dbReference>
<proteinExistence type="inferred from homology"/>